<sequence length="233" mass="25578">MSTESMIQDVELAEEAFSKTQGPQGSRRRWFLSLFSFLLVAGATALFCLLHFGVIGPQREEQSSRDFSPINSLALAVRSSSRIPSDKPVAHVVANPQAEGQLQWLNRRANALLANGVELRDNQLVVPSDGLYLVYSQVLFKGQGCPSTFTLLTHSISRIAVSYQAKVNLLSAIKSPCQRETPRGAKTHPWYEPIYLGGVFQLEKGDRLSAEISPPDSLDLAESGQVYFGIIAL</sequence>
<protein>
    <recommendedName>
        <fullName>Tumor necrosis factor</fullName>
    </recommendedName>
    <alternativeName>
        <fullName>Cachectin</fullName>
    </alternativeName>
    <alternativeName>
        <fullName>TNF-alpha</fullName>
    </alternativeName>
    <alternativeName>
        <fullName>Tumor necrosis factor ligand superfamily member 2</fullName>
        <shortName>TNF-a</shortName>
    </alternativeName>
    <component>
        <recommendedName>
            <fullName>Tumor necrosis factor, membrane form</fullName>
        </recommendedName>
        <alternativeName>
            <fullName>N-terminal fragment</fullName>
            <shortName>NTF</shortName>
        </alternativeName>
    </component>
    <component>
        <recommendedName>
            <fullName>Intracellular domain 1</fullName>
            <shortName>ICD1</shortName>
        </recommendedName>
    </component>
    <component>
        <recommendedName>
            <fullName>Intracellular domain 2</fullName>
            <shortName>ICD2</shortName>
        </recommendedName>
    </component>
    <component>
        <recommendedName>
            <fullName>C-domain 1</fullName>
        </recommendedName>
    </component>
    <component>
        <recommendedName>
            <fullName>C-domain 2</fullName>
        </recommendedName>
    </component>
    <component>
        <recommendedName>
            <fullName>Tumor necrosis factor, soluble form</fullName>
        </recommendedName>
    </component>
</protein>
<organism>
    <name type="scientific">Saimiri sciureus</name>
    <name type="common">Common squirrel monkey</name>
    <dbReference type="NCBI Taxonomy" id="9521"/>
    <lineage>
        <taxon>Eukaryota</taxon>
        <taxon>Metazoa</taxon>
        <taxon>Chordata</taxon>
        <taxon>Craniata</taxon>
        <taxon>Vertebrata</taxon>
        <taxon>Euteleostomi</taxon>
        <taxon>Mammalia</taxon>
        <taxon>Eutheria</taxon>
        <taxon>Euarchontoglires</taxon>
        <taxon>Primates</taxon>
        <taxon>Haplorrhini</taxon>
        <taxon>Platyrrhini</taxon>
        <taxon>Cebidae</taxon>
        <taxon>Saimiriinae</taxon>
        <taxon>Saimiri</taxon>
    </lineage>
</organism>
<gene>
    <name type="primary">TNF</name>
    <name type="synonym">TNFA</name>
    <name type="synonym">TNFSF2</name>
</gene>
<keyword id="KW-1003">Cell membrane</keyword>
<keyword id="KW-0202">Cytokine</keyword>
<keyword id="KW-1015">Disulfide bond</keyword>
<keyword id="KW-0325">Glycoprotein</keyword>
<keyword id="KW-0449">Lipoprotein</keyword>
<keyword id="KW-0472">Membrane</keyword>
<keyword id="KW-0519">Myristate</keyword>
<keyword id="KW-0597">Phosphoprotein</keyword>
<keyword id="KW-0964">Secreted</keyword>
<keyword id="KW-0735">Signal-anchor</keyword>
<keyword id="KW-0812">Transmembrane</keyword>
<keyword id="KW-1133">Transmembrane helix</keyword>
<evidence type="ECO:0000250" key="1"/>
<evidence type="ECO:0000250" key="2">
    <source>
        <dbReference type="UniProtKB" id="P01375"/>
    </source>
</evidence>
<evidence type="ECO:0000250" key="3">
    <source>
        <dbReference type="UniProtKB" id="P06804"/>
    </source>
</evidence>
<evidence type="ECO:0000255" key="4"/>
<evidence type="ECO:0000255" key="5">
    <source>
        <dbReference type="PROSITE-ProRule" id="PRU01387"/>
    </source>
</evidence>
<evidence type="ECO:0000305" key="6"/>
<accession>Q8MKG8</accession>
<dbReference type="EMBL" id="AF294760">
    <property type="protein sequence ID" value="AAK92047.1"/>
    <property type="molecule type" value="mRNA"/>
</dbReference>
<dbReference type="EMBL" id="AJ437697">
    <property type="protein sequence ID" value="CAD27179.1"/>
    <property type="molecule type" value="Genomic_DNA"/>
</dbReference>
<dbReference type="EMBL" id="AJ437698">
    <property type="protein sequence ID" value="CAD27180.1"/>
    <property type="molecule type" value="mRNA"/>
</dbReference>
<dbReference type="SMR" id="Q8MKG8"/>
<dbReference type="GlyCosmos" id="Q8MKG8">
    <property type="glycosylation" value="1 site, No reported glycans"/>
</dbReference>
<dbReference type="GO" id="GO:0009986">
    <property type="term" value="C:cell surface"/>
    <property type="evidence" value="ECO:0007669"/>
    <property type="project" value="TreeGrafter"/>
</dbReference>
<dbReference type="GO" id="GO:0005615">
    <property type="term" value="C:extracellular space"/>
    <property type="evidence" value="ECO:0007669"/>
    <property type="project" value="UniProtKB-KW"/>
</dbReference>
<dbReference type="GO" id="GO:0005886">
    <property type="term" value="C:plasma membrane"/>
    <property type="evidence" value="ECO:0007669"/>
    <property type="project" value="UniProtKB-SubCell"/>
</dbReference>
<dbReference type="GO" id="GO:0005125">
    <property type="term" value="F:cytokine activity"/>
    <property type="evidence" value="ECO:0007669"/>
    <property type="project" value="UniProtKB-KW"/>
</dbReference>
<dbReference type="GO" id="GO:0005164">
    <property type="term" value="F:tumor necrosis factor receptor binding"/>
    <property type="evidence" value="ECO:0007669"/>
    <property type="project" value="InterPro"/>
</dbReference>
<dbReference type="GO" id="GO:0008625">
    <property type="term" value="P:extrinsic apoptotic signaling pathway via death domain receptors"/>
    <property type="evidence" value="ECO:0007669"/>
    <property type="project" value="TreeGrafter"/>
</dbReference>
<dbReference type="GO" id="GO:0006955">
    <property type="term" value="P:immune response"/>
    <property type="evidence" value="ECO:0007669"/>
    <property type="project" value="InterPro"/>
</dbReference>
<dbReference type="GO" id="GO:0097527">
    <property type="term" value="P:necroptotic signaling pathway"/>
    <property type="evidence" value="ECO:0000250"/>
    <property type="project" value="CAFA"/>
</dbReference>
<dbReference type="GO" id="GO:0043123">
    <property type="term" value="P:positive regulation of canonical NF-kappaB signal transduction"/>
    <property type="evidence" value="ECO:0007669"/>
    <property type="project" value="TreeGrafter"/>
</dbReference>
<dbReference type="GO" id="GO:2001238">
    <property type="term" value="P:positive regulation of extrinsic apoptotic signaling pathway"/>
    <property type="evidence" value="ECO:0007669"/>
    <property type="project" value="TreeGrafter"/>
</dbReference>
<dbReference type="GO" id="GO:0051092">
    <property type="term" value="P:positive regulation of NF-kappaB transcription factor activity"/>
    <property type="evidence" value="ECO:0000250"/>
    <property type="project" value="UniProtKB"/>
</dbReference>
<dbReference type="GO" id="GO:0045944">
    <property type="term" value="P:positive regulation of transcription by RNA polymerase II"/>
    <property type="evidence" value="ECO:0007669"/>
    <property type="project" value="TreeGrafter"/>
</dbReference>
<dbReference type="GO" id="GO:0065008">
    <property type="term" value="P:regulation of biological quality"/>
    <property type="evidence" value="ECO:0007669"/>
    <property type="project" value="UniProtKB-ARBA"/>
</dbReference>
<dbReference type="GO" id="GO:0050793">
    <property type="term" value="P:regulation of developmental process"/>
    <property type="evidence" value="ECO:0007669"/>
    <property type="project" value="UniProtKB-ARBA"/>
</dbReference>
<dbReference type="GO" id="GO:0051239">
    <property type="term" value="P:regulation of multicellular organismal process"/>
    <property type="evidence" value="ECO:0007669"/>
    <property type="project" value="UniProtKB-ARBA"/>
</dbReference>
<dbReference type="GO" id="GO:0051046">
    <property type="term" value="P:regulation of secretion"/>
    <property type="evidence" value="ECO:0007669"/>
    <property type="project" value="UniProtKB-ARBA"/>
</dbReference>
<dbReference type="GO" id="GO:0033209">
    <property type="term" value="P:tumor necrosis factor-mediated signaling pathway"/>
    <property type="evidence" value="ECO:0007669"/>
    <property type="project" value="TreeGrafter"/>
</dbReference>
<dbReference type="GO" id="GO:0010573">
    <property type="term" value="P:vascular endothelial growth factor production"/>
    <property type="evidence" value="ECO:0000250"/>
    <property type="project" value="UniProtKB"/>
</dbReference>
<dbReference type="CDD" id="cd00184">
    <property type="entry name" value="TNF"/>
    <property type="match status" value="1"/>
</dbReference>
<dbReference type="FunFam" id="2.60.120.40:FF:000007">
    <property type="entry name" value="Tumor necrosis factor"/>
    <property type="match status" value="1"/>
</dbReference>
<dbReference type="Gene3D" id="2.60.120.40">
    <property type="match status" value="1"/>
</dbReference>
<dbReference type="InterPro" id="IPR006053">
    <property type="entry name" value="TNF"/>
</dbReference>
<dbReference type="InterPro" id="IPR002959">
    <property type="entry name" value="TNF_alpha"/>
</dbReference>
<dbReference type="InterPro" id="IPR021184">
    <property type="entry name" value="TNF_CS"/>
</dbReference>
<dbReference type="InterPro" id="IPR006052">
    <property type="entry name" value="TNF_dom"/>
</dbReference>
<dbReference type="InterPro" id="IPR008983">
    <property type="entry name" value="Tumour_necrosis_fac-like_dom"/>
</dbReference>
<dbReference type="PANTHER" id="PTHR11471:SF23">
    <property type="entry name" value="TUMOR NECROSIS FACTOR"/>
    <property type="match status" value="1"/>
</dbReference>
<dbReference type="PANTHER" id="PTHR11471">
    <property type="entry name" value="TUMOR NECROSIS FACTOR FAMILY MEMBER"/>
    <property type="match status" value="1"/>
</dbReference>
<dbReference type="Pfam" id="PF00229">
    <property type="entry name" value="TNF"/>
    <property type="match status" value="1"/>
</dbReference>
<dbReference type="PRINTS" id="PR01234">
    <property type="entry name" value="TNECROSISFCT"/>
</dbReference>
<dbReference type="PRINTS" id="PR01235">
    <property type="entry name" value="TNFALPHA"/>
</dbReference>
<dbReference type="SMART" id="SM00207">
    <property type="entry name" value="TNF"/>
    <property type="match status" value="1"/>
</dbReference>
<dbReference type="SUPFAM" id="SSF49842">
    <property type="entry name" value="TNF-like"/>
    <property type="match status" value="1"/>
</dbReference>
<dbReference type="PROSITE" id="PS00251">
    <property type="entry name" value="THD_1"/>
    <property type="match status" value="1"/>
</dbReference>
<dbReference type="PROSITE" id="PS50049">
    <property type="entry name" value="THD_2"/>
    <property type="match status" value="1"/>
</dbReference>
<comment type="function">
    <text evidence="2 3">Cytokine that binds to TNFRSF1A/TNFR1 and TNFRSF1B/TNFBR. It is mainly secreted by macrophages and can induce cell death of certain tumor cell lines. It is potent pyrogen causing fever by direct action or by stimulation of interleukin-1 secretion and is implicated in the induction of cachexia, Under certain conditions it can stimulate cell proliferation and induce cell differentiation (By similarity). Induces insulin resistance in adipocytes via inhibition of insulin-induced IRS1 tyrosine phosphorylation and insulin-induced glucose uptake. Induces GKAP42 protein degradation in adipocytes which is partially responsible for TNF-induced insulin resistance (By similarity). Plays a role in angiogenesis by inducing VEGF production synergistically with IL1B and IL6 (By similarity). Promotes osteoclastogenesis and therefore mediates bone resorption (By similarity).</text>
</comment>
<comment type="function">
    <text evidence="2">The TNF intracellular domain (ICD) form induces IL12 production in dendritic cells.</text>
</comment>
<comment type="subunit">
    <text evidence="1">Homotrimer. Interacts with SPPL2B (By similarity).</text>
</comment>
<comment type="subcellular location">
    <subcellularLocation>
        <location evidence="1">Cell membrane</location>
        <topology evidence="1">Single-pass type II membrane protein</topology>
    </subcellularLocation>
</comment>
<comment type="subcellular location">
    <molecule>Tumor necrosis factor, membrane form</molecule>
    <subcellularLocation>
        <location evidence="1">Membrane</location>
        <topology evidence="1">Single-pass type II membrane protein</topology>
    </subcellularLocation>
</comment>
<comment type="subcellular location">
    <molecule>Tumor necrosis factor, soluble form</molecule>
    <subcellularLocation>
        <location evidence="1">Secreted</location>
    </subcellularLocation>
</comment>
<comment type="subcellular location">
    <molecule>C-domain 1</molecule>
    <subcellularLocation>
        <location evidence="1">Secreted</location>
    </subcellularLocation>
</comment>
<comment type="subcellular location">
    <molecule>C-domain 2</molecule>
    <subcellularLocation>
        <location evidence="1">Secreted</location>
    </subcellularLocation>
</comment>
<comment type="PTM">
    <text evidence="1">The soluble form derives from the membrane form by proteolytic processing. The membrane-bound form is further proteolytically processed by SPPL2A or SPPL2B through regulated intramembrane proteolysis producing TNF intracellular domains (ICD1 and ICD2) released in the cytosol and TNF C-domain 1 and C-domain 2 secreted into the extracellular space (By similarity).</text>
</comment>
<comment type="PTM">
    <text evidence="1">The membrane form, but not the soluble form, is phosphorylated on serine residues. Dephosphorylation of the membrane form occurs by binding to soluble TNFRSF1A/TNFR1 (By similarity).</text>
</comment>
<comment type="PTM">
    <text evidence="1">O-glycosylated; glycans contain galactose, N-acetylgalactosamine and N-acetylneuraminic acid.</text>
</comment>
<comment type="PTM">
    <molecule>Tumor necrosis factor, soluble form</molecule>
    <text evidence="2">The soluble form is demyristoylated by SIRT6, promoting its secretion.</text>
</comment>
<comment type="similarity">
    <text evidence="6">Belongs to the tumor necrosis factor family.</text>
</comment>
<proteinExistence type="evidence at transcript level"/>
<feature type="chain" id="PRO_0000034453" description="Tumor necrosis factor, membrane form">
    <location>
        <begin position="1"/>
        <end position="233"/>
    </location>
</feature>
<feature type="chain" id="PRO_0000417291" description="Intracellular domain 1" evidence="1">
    <location>
        <begin position="1"/>
        <end position="38"/>
    </location>
</feature>
<feature type="chain" id="PRO_0000417292" description="Intracellular domain 2" evidence="1">
    <location>
        <begin position="1"/>
        <end position="34"/>
    </location>
</feature>
<feature type="chain" id="PRO_0000417293" description="C-domain 1" evidence="1">
    <location>
        <begin position="49"/>
        <end status="unknown"/>
    </location>
</feature>
<feature type="chain" id="PRO_0000417294" description="C-domain 2" evidence="1">
    <location>
        <begin position="51"/>
        <end status="unknown"/>
    </location>
</feature>
<feature type="chain" id="PRO_0000034454" description="Tumor necrosis factor, soluble form" evidence="1">
    <location>
        <begin position="77"/>
        <end position="233"/>
    </location>
</feature>
<feature type="topological domain" description="Cytoplasmic" evidence="4">
    <location>
        <begin position="1"/>
        <end position="32"/>
    </location>
</feature>
<feature type="transmembrane region" description="Helical; Signal-anchor for type II membrane protein" evidence="1">
    <location>
        <begin position="33"/>
        <end position="55"/>
    </location>
</feature>
<feature type="topological domain" description="Extracellular" evidence="4">
    <location>
        <begin position="56"/>
        <end position="233"/>
    </location>
</feature>
<feature type="domain" description="THD" evidence="5">
    <location>
        <begin position="88"/>
        <end position="233"/>
    </location>
</feature>
<feature type="site" description="Cleavage; by SPPL2A or SPPL2B" evidence="1">
    <location>
        <begin position="33"/>
        <end position="34"/>
    </location>
</feature>
<feature type="site" description="Cleavage; by SPPL2A or SPPL2B" evidence="1">
    <location>
        <begin position="38"/>
        <end position="39"/>
    </location>
</feature>
<feature type="site" description="Cleavage; by SPPL2A or SPPL2B" evidence="1">
    <location>
        <begin position="48"/>
        <end position="49"/>
    </location>
</feature>
<feature type="site" description="Cleavage; by SPPL2A or SPPL2B" evidence="1">
    <location>
        <begin position="50"/>
        <end position="51"/>
    </location>
</feature>
<feature type="site" description="Cleavage; by ADAM17" evidence="1">
    <location>
        <begin position="76"/>
        <end position="77"/>
    </location>
</feature>
<feature type="modified residue" description="Phosphoserine; by CK1" evidence="1">
    <location>
        <position position="2"/>
    </location>
</feature>
<feature type="lipid moiety-binding region" description="N6-myristoyl lysine" evidence="2">
    <location>
        <position position="19"/>
    </location>
</feature>
<feature type="glycosylation site" description="O-linked (GalNAc...) serine; in soluble form" evidence="1">
    <location>
        <position position="80"/>
    </location>
</feature>
<feature type="disulfide bond" evidence="5">
    <location>
        <begin position="145"/>
        <end position="177"/>
    </location>
</feature>
<name>TNFA_SAISC</name>
<reference key="1">
    <citation type="journal article" date="2002" name="Immunogenetics">
        <title>Molecular cloning, characterization, and quantification of squirrel monkey (Saimiri sciureus) Th1 and Th2 cytokines.</title>
        <authorList>
            <person name="Heraud J.M."/>
            <person name="Lavergne A."/>
            <person name="Kazanji M."/>
        </authorList>
    </citation>
    <scope>NUCLEOTIDE SEQUENCE [MRNA]</scope>
</reference>
<reference key="2">
    <citation type="journal article" date="2003" name="Vet. Immunol. Immunopathol.">
        <title>Sequencing and analysis of genomic DNA and cDNA encoding TNF-alpha in the squirrel monkey (Saimiri sciureus).</title>
        <authorList>
            <person name="Merien F."/>
            <person name="Lavergne A."/>
            <person name="Behr C."/>
            <person name="Contamin H."/>
        </authorList>
    </citation>
    <scope>NUCLEOTIDE SEQUENCE</scope>
</reference>